<keyword id="KW-0027">Amidation</keyword>
<keyword id="KW-0903">Direct protein sequencing</keyword>
<keyword id="KW-0527">Neuropeptide</keyword>
<keyword id="KW-0964">Secreted</keyword>
<feature type="peptide" id="PRO_0000043467" description="Carcinustatin-12">
    <location>
        <begin position="1"/>
        <end position="8"/>
    </location>
</feature>
<feature type="modified residue" description="Leucine amide" evidence="1">
    <location>
        <position position="8"/>
    </location>
</feature>
<dbReference type="GO" id="GO:0005576">
    <property type="term" value="C:extracellular region"/>
    <property type="evidence" value="ECO:0007669"/>
    <property type="project" value="UniProtKB-SubCell"/>
</dbReference>
<dbReference type="GO" id="GO:0007218">
    <property type="term" value="P:neuropeptide signaling pathway"/>
    <property type="evidence" value="ECO:0007669"/>
    <property type="project" value="UniProtKB-KW"/>
</dbReference>
<sequence>PDMYAFGL</sequence>
<comment type="function">
    <text>May act as a neurotransmitter or neuromodulator.</text>
</comment>
<comment type="subcellular location">
    <subcellularLocation>
        <location>Secreted</location>
    </subcellularLocation>
</comment>
<comment type="similarity">
    <text evidence="2">Belongs to the allatostatin family.</text>
</comment>
<name>ALL12_CARMA</name>
<organism>
    <name type="scientific">Carcinus maenas</name>
    <name type="common">Common shore crab</name>
    <name type="synonym">Green crab</name>
    <dbReference type="NCBI Taxonomy" id="6759"/>
    <lineage>
        <taxon>Eukaryota</taxon>
        <taxon>Metazoa</taxon>
        <taxon>Ecdysozoa</taxon>
        <taxon>Arthropoda</taxon>
        <taxon>Crustacea</taxon>
        <taxon>Multicrustacea</taxon>
        <taxon>Malacostraca</taxon>
        <taxon>Eumalacostraca</taxon>
        <taxon>Eucarida</taxon>
        <taxon>Decapoda</taxon>
        <taxon>Pleocyemata</taxon>
        <taxon>Brachyura</taxon>
        <taxon>Eubrachyura</taxon>
        <taxon>Portunoidea</taxon>
        <taxon>Carcinidae</taxon>
        <taxon>Carcinus</taxon>
    </lineage>
</organism>
<evidence type="ECO:0000269" key="1">
    <source>
    </source>
</evidence>
<evidence type="ECO:0000305" key="2"/>
<reference key="1">
    <citation type="journal article" date="1997" name="Eur. J. Biochem.">
        <title>Isolation and identification of multiple neuropeptides of the allatostatin superfamily in the shore crab Carcinus maenas.</title>
        <authorList>
            <person name="Duve H."/>
            <person name="Johnsen A.H."/>
            <person name="Maestro J.-L."/>
            <person name="Scott A.G."/>
            <person name="Jaros P.P."/>
            <person name="Thorpe A."/>
        </authorList>
    </citation>
    <scope>PROTEIN SEQUENCE</scope>
    <scope>AMIDATION AT LEU-8</scope>
    <source>
        <tissue>Cerebral ganglion</tissue>
        <tissue>Thoracic ganglion</tissue>
    </source>
</reference>
<accession>P81815</accession>
<protein>
    <recommendedName>
        <fullName>Carcinustatin-12</fullName>
    </recommendedName>
</protein>
<proteinExistence type="evidence at protein level"/>